<accession>A4G616</accession>
<feature type="chain" id="PRO_1000048993" description="Large ribosomal subunit protein bL20">
    <location>
        <begin position="1"/>
        <end position="119"/>
    </location>
</feature>
<sequence>MPRVKRGVTARARHKKVLDQAKGYRGRRSKVYRIAKQAVMRAGQYAYRDRRNKKRVFRALWITRINAASREHGLTYSVFMNGLKRASIELDRKVLADMAVMDKPAFAAIVNQVKTTIAA</sequence>
<comment type="function">
    <text evidence="1">Binds directly to 23S ribosomal RNA and is necessary for the in vitro assembly process of the 50S ribosomal subunit. It is not involved in the protein synthesizing functions of that subunit.</text>
</comment>
<comment type="similarity">
    <text evidence="1">Belongs to the bacterial ribosomal protein bL20 family.</text>
</comment>
<name>RL20_HERAR</name>
<reference key="1">
    <citation type="journal article" date="2007" name="PLoS Genet.">
        <title>A tale of two oxidation states: bacterial colonization of arsenic-rich environments.</title>
        <authorList>
            <person name="Muller D."/>
            <person name="Medigue C."/>
            <person name="Koechler S."/>
            <person name="Barbe V."/>
            <person name="Barakat M."/>
            <person name="Talla E."/>
            <person name="Bonnefoy V."/>
            <person name="Krin E."/>
            <person name="Arsene-Ploetze F."/>
            <person name="Carapito C."/>
            <person name="Chandler M."/>
            <person name="Cournoyer B."/>
            <person name="Cruveiller S."/>
            <person name="Dossat C."/>
            <person name="Duval S."/>
            <person name="Heymann M."/>
            <person name="Leize E."/>
            <person name="Lieutaud A."/>
            <person name="Lievremont D."/>
            <person name="Makita Y."/>
            <person name="Mangenot S."/>
            <person name="Nitschke W."/>
            <person name="Ortet P."/>
            <person name="Perdrial N."/>
            <person name="Schoepp B."/>
            <person name="Siguier P."/>
            <person name="Simeonova D.D."/>
            <person name="Rouy Z."/>
            <person name="Segurens B."/>
            <person name="Turlin E."/>
            <person name="Vallenet D."/>
            <person name="van Dorsselaer A."/>
            <person name="Weiss S."/>
            <person name="Weissenbach J."/>
            <person name="Lett M.-C."/>
            <person name="Danchin A."/>
            <person name="Bertin P.N."/>
        </authorList>
    </citation>
    <scope>NUCLEOTIDE SEQUENCE [LARGE SCALE GENOMIC DNA]</scope>
    <source>
        <strain>ULPAs1</strain>
    </source>
</reference>
<proteinExistence type="inferred from homology"/>
<evidence type="ECO:0000255" key="1">
    <source>
        <dbReference type="HAMAP-Rule" id="MF_00382"/>
    </source>
</evidence>
<evidence type="ECO:0000305" key="2"/>
<dbReference type="EMBL" id="CU207211">
    <property type="protein sequence ID" value="CAL61953.1"/>
    <property type="molecule type" value="Genomic_DNA"/>
</dbReference>
<dbReference type="SMR" id="A4G616"/>
<dbReference type="STRING" id="204773.HEAR1798"/>
<dbReference type="KEGG" id="har:HEAR1798"/>
<dbReference type="eggNOG" id="COG0292">
    <property type="taxonomic scope" value="Bacteria"/>
</dbReference>
<dbReference type="HOGENOM" id="CLU_123265_0_1_4"/>
<dbReference type="OrthoDB" id="9808966at2"/>
<dbReference type="Proteomes" id="UP000006697">
    <property type="component" value="Chromosome"/>
</dbReference>
<dbReference type="GO" id="GO:1990904">
    <property type="term" value="C:ribonucleoprotein complex"/>
    <property type="evidence" value="ECO:0007669"/>
    <property type="project" value="UniProtKB-KW"/>
</dbReference>
<dbReference type="GO" id="GO:0005840">
    <property type="term" value="C:ribosome"/>
    <property type="evidence" value="ECO:0007669"/>
    <property type="project" value="UniProtKB-KW"/>
</dbReference>
<dbReference type="GO" id="GO:0019843">
    <property type="term" value="F:rRNA binding"/>
    <property type="evidence" value="ECO:0007669"/>
    <property type="project" value="UniProtKB-UniRule"/>
</dbReference>
<dbReference type="GO" id="GO:0003735">
    <property type="term" value="F:structural constituent of ribosome"/>
    <property type="evidence" value="ECO:0007669"/>
    <property type="project" value="InterPro"/>
</dbReference>
<dbReference type="GO" id="GO:0000027">
    <property type="term" value="P:ribosomal large subunit assembly"/>
    <property type="evidence" value="ECO:0007669"/>
    <property type="project" value="UniProtKB-UniRule"/>
</dbReference>
<dbReference type="GO" id="GO:0006412">
    <property type="term" value="P:translation"/>
    <property type="evidence" value="ECO:0007669"/>
    <property type="project" value="InterPro"/>
</dbReference>
<dbReference type="CDD" id="cd07026">
    <property type="entry name" value="Ribosomal_L20"/>
    <property type="match status" value="1"/>
</dbReference>
<dbReference type="FunFam" id="1.10.1900.20:FF:000001">
    <property type="entry name" value="50S ribosomal protein L20"/>
    <property type="match status" value="1"/>
</dbReference>
<dbReference type="Gene3D" id="6.10.160.10">
    <property type="match status" value="1"/>
</dbReference>
<dbReference type="Gene3D" id="1.10.1900.20">
    <property type="entry name" value="Ribosomal protein L20"/>
    <property type="match status" value="1"/>
</dbReference>
<dbReference type="HAMAP" id="MF_00382">
    <property type="entry name" value="Ribosomal_bL20"/>
    <property type="match status" value="1"/>
</dbReference>
<dbReference type="InterPro" id="IPR005813">
    <property type="entry name" value="Ribosomal_bL20"/>
</dbReference>
<dbReference type="InterPro" id="IPR049946">
    <property type="entry name" value="RIBOSOMAL_L20_CS"/>
</dbReference>
<dbReference type="InterPro" id="IPR035566">
    <property type="entry name" value="Ribosomal_protein_bL20_C"/>
</dbReference>
<dbReference type="NCBIfam" id="TIGR01032">
    <property type="entry name" value="rplT_bact"/>
    <property type="match status" value="1"/>
</dbReference>
<dbReference type="PANTHER" id="PTHR10986">
    <property type="entry name" value="39S RIBOSOMAL PROTEIN L20"/>
    <property type="match status" value="1"/>
</dbReference>
<dbReference type="Pfam" id="PF00453">
    <property type="entry name" value="Ribosomal_L20"/>
    <property type="match status" value="1"/>
</dbReference>
<dbReference type="PRINTS" id="PR00062">
    <property type="entry name" value="RIBOSOMALL20"/>
</dbReference>
<dbReference type="SUPFAM" id="SSF74731">
    <property type="entry name" value="Ribosomal protein L20"/>
    <property type="match status" value="1"/>
</dbReference>
<dbReference type="PROSITE" id="PS00937">
    <property type="entry name" value="RIBOSOMAL_L20"/>
    <property type="match status" value="1"/>
</dbReference>
<protein>
    <recommendedName>
        <fullName evidence="1">Large ribosomal subunit protein bL20</fullName>
    </recommendedName>
    <alternativeName>
        <fullName evidence="2">50S ribosomal protein L20</fullName>
    </alternativeName>
</protein>
<gene>
    <name evidence="1" type="primary">rplT</name>
    <name type="ordered locus">HEAR1798</name>
</gene>
<keyword id="KW-1185">Reference proteome</keyword>
<keyword id="KW-0687">Ribonucleoprotein</keyword>
<keyword id="KW-0689">Ribosomal protein</keyword>
<keyword id="KW-0694">RNA-binding</keyword>
<keyword id="KW-0699">rRNA-binding</keyword>
<organism>
    <name type="scientific">Herminiimonas arsenicoxydans</name>
    <dbReference type="NCBI Taxonomy" id="204773"/>
    <lineage>
        <taxon>Bacteria</taxon>
        <taxon>Pseudomonadati</taxon>
        <taxon>Pseudomonadota</taxon>
        <taxon>Betaproteobacteria</taxon>
        <taxon>Burkholderiales</taxon>
        <taxon>Oxalobacteraceae</taxon>
        <taxon>Herminiimonas</taxon>
    </lineage>
</organism>